<feature type="chain" id="PRO_0000333907" description="Cell division protein ZapB">
    <location>
        <begin position="1"/>
        <end position="72"/>
    </location>
</feature>
<feature type="region of interest" description="Disordered" evidence="2">
    <location>
        <begin position="36"/>
        <end position="56"/>
    </location>
</feature>
<feature type="coiled-coil region" evidence="1">
    <location>
        <begin position="1"/>
        <end position="71"/>
    </location>
</feature>
<feature type="compositionally biased region" description="Basic and acidic residues" evidence="2">
    <location>
        <begin position="44"/>
        <end position="56"/>
    </location>
</feature>
<evidence type="ECO:0000255" key="1">
    <source>
        <dbReference type="HAMAP-Rule" id="MF_01196"/>
    </source>
</evidence>
<evidence type="ECO:0000256" key="2">
    <source>
        <dbReference type="SAM" id="MobiDB-lite"/>
    </source>
</evidence>
<comment type="function">
    <text evidence="1">Non-essential, abundant cell division factor that is required for proper Z-ring formation. It is recruited early to the divisome by direct interaction with FtsZ, stimulating Z-ring assembly and thereby promoting cell division earlier in the cell cycle. Its recruitment to the Z-ring requires functional FtsA or ZipA.</text>
</comment>
<comment type="subunit">
    <text evidence="1">Homodimer. The ends of the coiled-coil dimer bind to each other, forming polymers. Interacts with FtsZ.</text>
</comment>
<comment type="subcellular location">
    <subcellularLocation>
        <location>Cytoplasm</location>
    </subcellularLocation>
    <text evidence="1">Localizes to the septum at mid-cell, in a FtsZ-like pattern.</text>
</comment>
<comment type="similarity">
    <text evidence="1">Belongs to the ZapB family.</text>
</comment>
<gene>
    <name evidence="1" type="primary">zapB</name>
    <name type="ordered locus">HS_1707</name>
</gene>
<accession>Q0I5W2</accession>
<keyword id="KW-0131">Cell cycle</keyword>
<keyword id="KW-0132">Cell division</keyword>
<keyword id="KW-0175">Coiled coil</keyword>
<keyword id="KW-0963">Cytoplasm</keyword>
<keyword id="KW-0717">Septation</keyword>
<dbReference type="EMBL" id="CP000436">
    <property type="protein sequence ID" value="ABI25975.1"/>
    <property type="molecule type" value="Genomic_DNA"/>
</dbReference>
<dbReference type="SMR" id="Q0I5W2"/>
<dbReference type="KEGG" id="hso:HS_1707"/>
<dbReference type="eggNOG" id="COG3074">
    <property type="taxonomic scope" value="Bacteria"/>
</dbReference>
<dbReference type="HOGENOM" id="CLU_171174_2_0_6"/>
<dbReference type="GO" id="GO:0005737">
    <property type="term" value="C:cytoplasm"/>
    <property type="evidence" value="ECO:0007669"/>
    <property type="project" value="UniProtKB-SubCell"/>
</dbReference>
<dbReference type="GO" id="GO:0000917">
    <property type="term" value="P:division septum assembly"/>
    <property type="evidence" value="ECO:0007669"/>
    <property type="project" value="UniProtKB-KW"/>
</dbReference>
<dbReference type="GO" id="GO:0043093">
    <property type="term" value="P:FtsZ-dependent cytokinesis"/>
    <property type="evidence" value="ECO:0007669"/>
    <property type="project" value="UniProtKB-UniRule"/>
</dbReference>
<dbReference type="Gene3D" id="1.20.5.340">
    <property type="match status" value="1"/>
</dbReference>
<dbReference type="HAMAP" id="MF_01196">
    <property type="entry name" value="ZapB"/>
    <property type="match status" value="1"/>
</dbReference>
<dbReference type="InterPro" id="IPR009252">
    <property type="entry name" value="Cell_div_ZapB"/>
</dbReference>
<dbReference type="Pfam" id="PF06005">
    <property type="entry name" value="ZapB"/>
    <property type="match status" value="1"/>
</dbReference>
<protein>
    <recommendedName>
        <fullName evidence="1">Cell division protein ZapB</fullName>
    </recommendedName>
</protein>
<organism>
    <name type="scientific">Histophilus somni (strain 129Pt)</name>
    <name type="common">Haemophilus somnus</name>
    <dbReference type="NCBI Taxonomy" id="205914"/>
    <lineage>
        <taxon>Bacteria</taxon>
        <taxon>Pseudomonadati</taxon>
        <taxon>Pseudomonadota</taxon>
        <taxon>Gammaproteobacteria</taxon>
        <taxon>Pasteurellales</taxon>
        <taxon>Pasteurellaceae</taxon>
        <taxon>Histophilus</taxon>
    </lineage>
</organism>
<reference key="1">
    <citation type="journal article" date="2007" name="J. Bacteriol.">
        <title>Complete genome sequence of Haemophilus somnus (Histophilus somni) strain 129Pt and comparison to Haemophilus ducreyi 35000HP and Haemophilus influenzae Rd.</title>
        <authorList>
            <person name="Challacombe J.F."/>
            <person name="Duncan A.J."/>
            <person name="Brettin T.S."/>
            <person name="Bruce D."/>
            <person name="Chertkov O."/>
            <person name="Detter J.C."/>
            <person name="Han C.S."/>
            <person name="Misra M."/>
            <person name="Richardson P."/>
            <person name="Tapia R."/>
            <person name="Thayer N."/>
            <person name="Xie G."/>
            <person name="Inzana T.J."/>
        </authorList>
    </citation>
    <scope>NUCLEOTIDE SEQUENCE [LARGE SCALE GENOMIC DNA]</scope>
    <source>
        <strain>129Pt</strain>
    </source>
</reference>
<proteinExistence type="inferred from homology"/>
<name>ZAPB_HISS1</name>
<sequence length="72" mass="8703">MSLEILDQLEEKIKQAVETIQLLQLEIEELKEKNELSRQTNEQLRSENEHLKTEHHNWQERLRSLLGRIDNI</sequence>